<gene>
    <name evidence="1" type="primary">thrB</name>
    <name type="ordered locus">LMHCC_0052</name>
</gene>
<keyword id="KW-0028">Amino-acid biosynthesis</keyword>
<keyword id="KW-0067">ATP-binding</keyword>
<keyword id="KW-0963">Cytoplasm</keyword>
<keyword id="KW-0418">Kinase</keyword>
<keyword id="KW-0547">Nucleotide-binding</keyword>
<keyword id="KW-0791">Threonine biosynthesis</keyword>
<keyword id="KW-0808">Transferase</keyword>
<protein>
    <recommendedName>
        <fullName evidence="1">Homoserine kinase</fullName>
        <shortName evidence="1">HK</shortName>
        <shortName evidence="1">HSK</shortName>
        <ecNumber evidence="1">2.7.1.39</ecNumber>
    </recommendedName>
</protein>
<accession>B8DBG4</accession>
<evidence type="ECO:0000255" key="1">
    <source>
        <dbReference type="HAMAP-Rule" id="MF_00384"/>
    </source>
</evidence>
<dbReference type="EC" id="2.7.1.39" evidence="1"/>
<dbReference type="EMBL" id="CP001175">
    <property type="protein sequence ID" value="ACK38415.1"/>
    <property type="molecule type" value="Genomic_DNA"/>
</dbReference>
<dbReference type="RefSeq" id="WP_003729256.1">
    <property type="nucleotide sequence ID" value="NC_011660.1"/>
</dbReference>
<dbReference type="SMR" id="B8DBG4"/>
<dbReference type="KEGG" id="lmh:LMHCC_0052"/>
<dbReference type="HOGENOM" id="CLU_041243_0_0_9"/>
<dbReference type="UniPathway" id="UPA00050">
    <property type="reaction ID" value="UER00064"/>
</dbReference>
<dbReference type="GO" id="GO:0005737">
    <property type="term" value="C:cytoplasm"/>
    <property type="evidence" value="ECO:0007669"/>
    <property type="project" value="UniProtKB-SubCell"/>
</dbReference>
<dbReference type="GO" id="GO:0005524">
    <property type="term" value="F:ATP binding"/>
    <property type="evidence" value="ECO:0007669"/>
    <property type="project" value="UniProtKB-UniRule"/>
</dbReference>
<dbReference type="GO" id="GO:0004413">
    <property type="term" value="F:homoserine kinase activity"/>
    <property type="evidence" value="ECO:0007669"/>
    <property type="project" value="UniProtKB-UniRule"/>
</dbReference>
<dbReference type="GO" id="GO:0009088">
    <property type="term" value="P:threonine biosynthetic process"/>
    <property type="evidence" value="ECO:0007669"/>
    <property type="project" value="UniProtKB-UniRule"/>
</dbReference>
<dbReference type="Gene3D" id="3.30.230.10">
    <property type="match status" value="1"/>
</dbReference>
<dbReference type="Gene3D" id="3.30.70.890">
    <property type="entry name" value="GHMP kinase, C-terminal domain"/>
    <property type="match status" value="1"/>
</dbReference>
<dbReference type="HAMAP" id="MF_00384">
    <property type="entry name" value="Homoser_kinase"/>
    <property type="match status" value="1"/>
</dbReference>
<dbReference type="InterPro" id="IPR013750">
    <property type="entry name" value="GHMP_kinase_C_dom"/>
</dbReference>
<dbReference type="InterPro" id="IPR036554">
    <property type="entry name" value="GHMP_kinase_C_sf"/>
</dbReference>
<dbReference type="InterPro" id="IPR006204">
    <property type="entry name" value="GHMP_kinase_N_dom"/>
</dbReference>
<dbReference type="InterPro" id="IPR006203">
    <property type="entry name" value="GHMP_knse_ATP-bd_CS"/>
</dbReference>
<dbReference type="InterPro" id="IPR000870">
    <property type="entry name" value="Homoserine_kinase"/>
</dbReference>
<dbReference type="InterPro" id="IPR020568">
    <property type="entry name" value="Ribosomal_Su5_D2-typ_SF"/>
</dbReference>
<dbReference type="InterPro" id="IPR014721">
    <property type="entry name" value="Ribsml_uS5_D2-typ_fold_subgr"/>
</dbReference>
<dbReference type="NCBIfam" id="TIGR00191">
    <property type="entry name" value="thrB"/>
    <property type="match status" value="1"/>
</dbReference>
<dbReference type="PANTHER" id="PTHR20861:SF1">
    <property type="entry name" value="HOMOSERINE KINASE"/>
    <property type="match status" value="1"/>
</dbReference>
<dbReference type="PANTHER" id="PTHR20861">
    <property type="entry name" value="HOMOSERINE/4-DIPHOSPHOCYTIDYL-2-C-METHYL-D-ERYTHRITOL KINASE"/>
    <property type="match status" value="1"/>
</dbReference>
<dbReference type="Pfam" id="PF08544">
    <property type="entry name" value="GHMP_kinases_C"/>
    <property type="match status" value="1"/>
</dbReference>
<dbReference type="Pfam" id="PF00288">
    <property type="entry name" value="GHMP_kinases_N"/>
    <property type="match status" value="1"/>
</dbReference>
<dbReference type="PIRSF" id="PIRSF000676">
    <property type="entry name" value="Homoser_kin"/>
    <property type="match status" value="1"/>
</dbReference>
<dbReference type="PRINTS" id="PR00958">
    <property type="entry name" value="HOMSERKINASE"/>
</dbReference>
<dbReference type="SUPFAM" id="SSF55060">
    <property type="entry name" value="GHMP Kinase, C-terminal domain"/>
    <property type="match status" value="1"/>
</dbReference>
<dbReference type="SUPFAM" id="SSF54211">
    <property type="entry name" value="Ribosomal protein S5 domain 2-like"/>
    <property type="match status" value="1"/>
</dbReference>
<dbReference type="PROSITE" id="PS00627">
    <property type="entry name" value="GHMP_KINASES_ATP"/>
    <property type="match status" value="1"/>
</dbReference>
<proteinExistence type="inferred from homology"/>
<comment type="function">
    <text evidence="1">Catalyzes the ATP-dependent phosphorylation of L-homoserine to L-homoserine phosphate.</text>
</comment>
<comment type="catalytic activity">
    <reaction evidence="1">
        <text>L-homoserine + ATP = O-phospho-L-homoserine + ADP + H(+)</text>
        <dbReference type="Rhea" id="RHEA:13985"/>
        <dbReference type="ChEBI" id="CHEBI:15378"/>
        <dbReference type="ChEBI" id="CHEBI:30616"/>
        <dbReference type="ChEBI" id="CHEBI:57476"/>
        <dbReference type="ChEBI" id="CHEBI:57590"/>
        <dbReference type="ChEBI" id="CHEBI:456216"/>
        <dbReference type="EC" id="2.7.1.39"/>
    </reaction>
</comment>
<comment type="pathway">
    <text evidence="1">Amino-acid biosynthesis; L-threonine biosynthesis; L-threonine from L-aspartate: step 4/5.</text>
</comment>
<comment type="subcellular location">
    <subcellularLocation>
        <location evidence="1">Cytoplasm</location>
    </subcellularLocation>
</comment>
<comment type="similarity">
    <text evidence="1">Belongs to the GHMP kinase family. Homoserine kinase subfamily.</text>
</comment>
<reference key="1">
    <citation type="journal article" date="2011" name="J. Bacteriol.">
        <title>Genome sequence of lineage III Listeria monocytogenes strain HCC23.</title>
        <authorList>
            <person name="Steele C.L."/>
            <person name="Donaldson J.R."/>
            <person name="Paul D."/>
            <person name="Banes M.M."/>
            <person name="Arick T."/>
            <person name="Bridges S.M."/>
            <person name="Lawrence M.L."/>
        </authorList>
    </citation>
    <scope>NUCLEOTIDE SEQUENCE [LARGE SCALE GENOMIC DNA]</scope>
    <source>
        <strain>HCC23</strain>
    </source>
</reference>
<sequence>MRIRVPATTANLGPGFDSCGLALTLYLTLDIGAEADSWYIEHNIGGGIPHDETNVIIETALNLAPNLTPHHLVMTCDIPPARGLGSSSAAVVAGIELANTLAELNLSKEEKVRIAAEIEGHPDNVAPAVLGNWVVGAKLDGEDFYVRHLFPDCALIAFIPKAELLTSESRGVLPDTLPFKEAVQASSIANVMIAAILRNDMTLAGEMMERDLWHEKYRSQLVPHLTQIRDVAKSQGAYAACLSGAGPTVLVFAPRNLANKLQTSLQTLEIDADVLLLDVEGSGAEVFR</sequence>
<feature type="chain" id="PRO_1000134254" description="Homoserine kinase">
    <location>
        <begin position="1"/>
        <end position="288"/>
    </location>
</feature>
<feature type="binding site" evidence="1">
    <location>
        <begin position="79"/>
        <end position="89"/>
    </location>
    <ligand>
        <name>ATP</name>
        <dbReference type="ChEBI" id="CHEBI:30616"/>
    </ligand>
</feature>
<organism>
    <name type="scientific">Listeria monocytogenes serotype 4a (strain HCC23)</name>
    <dbReference type="NCBI Taxonomy" id="552536"/>
    <lineage>
        <taxon>Bacteria</taxon>
        <taxon>Bacillati</taxon>
        <taxon>Bacillota</taxon>
        <taxon>Bacilli</taxon>
        <taxon>Bacillales</taxon>
        <taxon>Listeriaceae</taxon>
        <taxon>Listeria</taxon>
    </lineage>
</organism>
<name>KHSE_LISMH</name>